<comment type="function">
    <text>Provides the cells with the ability to utilize trehalose at high osmolarity by splitting it into glucose molecules that can subsequently be taken up by the phosphotransferase-mediated uptake system.</text>
</comment>
<comment type="catalytic activity">
    <reaction evidence="1 3 4">
        <text>alpha,alpha-trehalose + H2O = alpha-D-glucose + beta-D-glucose</text>
        <dbReference type="Rhea" id="RHEA:32675"/>
        <dbReference type="ChEBI" id="CHEBI:15377"/>
        <dbReference type="ChEBI" id="CHEBI:15903"/>
        <dbReference type="ChEBI" id="CHEBI:16551"/>
        <dbReference type="ChEBI" id="CHEBI:17925"/>
        <dbReference type="EC" id="3.2.1.28"/>
    </reaction>
</comment>
<comment type="subunit">
    <text evidence="8">Monomer.</text>
</comment>
<comment type="subcellular location">
    <subcellularLocation>
        <location>Periplasm</location>
    </subcellularLocation>
</comment>
<comment type="induction">
    <text>By growth at high osmolarity, is regulated by cAMP.</text>
</comment>
<comment type="similarity">
    <text evidence="1">Belongs to the glycosyl hydrolase 37 family.</text>
</comment>
<organism>
    <name type="scientific">Escherichia coli (strain K12)</name>
    <dbReference type="NCBI Taxonomy" id="83333"/>
    <lineage>
        <taxon>Bacteria</taxon>
        <taxon>Pseudomonadati</taxon>
        <taxon>Pseudomonadota</taxon>
        <taxon>Gammaproteobacteria</taxon>
        <taxon>Enterobacterales</taxon>
        <taxon>Enterobacteriaceae</taxon>
        <taxon>Escherichia</taxon>
    </lineage>
</organism>
<name>TREA_ECOLI</name>
<sequence>MKSPAPSRPQKMALIPACIFLCFAALSVQAEETPVTPQPPDILLGPLFNDVQNAKLFPDQKTFADAVPNSDPLMILADYRMQQNQSGFDLRHFVNVNFTLPKEGEKYVPPEGQSLREHIDGLWPVLTRSTENTEKWDSLLPLPEPYVVPGGRFREVYYWDSYFTMLGLAESGHWDKVADMVANFAHEIDTYGHIPNGNRSYYLSRSQPPFFALMVELLAQHEGDAALKQYLPQMQKEYAYWMDGVENLQAGQQEKRVVKLQDGTLLNRYWDDRDTPRPESWVEDIATAKSNPNRPATEIYRDLRSAAASGWDFSSRWMDNPQQLNTLRTTSIVPVDLNSLMFKMEKILARASKAAGDNAMANQYETLANARQKGIEKYLWNDQQGWYADYDLKSHKVRNQLTAAALFPLYVNAAAKDRANKMATATKTHLLQPGGLNTTSVKSGQQWDAPNGWAPLQWVATEGLQNYGQKEVAMDISWHFLTNVQHTYDREKKLVEKYDVSTTGTGGGGGEYPLQDGFGWTNGVTLKMLDLICPKEQPCDNVPATRPTVKSATTQPSTKEAQPTP</sequence>
<accession>P13482</accession>
<gene>
    <name evidence="1" type="primary">treA</name>
    <name type="synonym">osmA</name>
    <name type="ordered locus">b1197</name>
    <name type="ordered locus">JW1186</name>
</gene>
<protein>
    <recommendedName>
        <fullName evidence="1">Periplasmic trehalase</fullName>
        <ecNumber evidence="1">3.2.1.28</ecNumber>
    </recommendedName>
    <alternativeName>
        <fullName evidence="1">Alpha,alpha-trehalase</fullName>
    </alternativeName>
    <alternativeName>
        <fullName evidence="1">Alpha,alpha-trehalose glucohydrolase</fullName>
        <shortName>Tre37A</shortName>
    </alternativeName>
</protein>
<feature type="signal peptide" evidence="1 5">
    <location>
        <begin position="1"/>
        <end position="30"/>
    </location>
</feature>
<feature type="chain" id="PRO_0000012041" description="Periplasmic trehalase">
    <location>
        <begin position="31"/>
        <end position="565"/>
    </location>
</feature>
<feature type="region of interest" description="Disordered" evidence="2">
    <location>
        <begin position="538"/>
        <end position="565"/>
    </location>
</feature>
<feature type="compositionally biased region" description="Polar residues" evidence="2">
    <location>
        <begin position="548"/>
        <end position="565"/>
    </location>
</feature>
<feature type="active site" description="Proton donor/acceptor" evidence="7 8">
    <location>
        <position position="312"/>
    </location>
</feature>
<feature type="active site" description="Proton donor/acceptor" evidence="7 8">
    <location>
        <position position="496"/>
    </location>
</feature>
<feature type="binding site" evidence="6">
    <location>
        <position position="152"/>
    </location>
    <ligand>
        <name>substrate</name>
    </ligand>
</feature>
<feature type="binding site" evidence="6">
    <location>
        <begin position="159"/>
        <end position="160"/>
    </location>
    <ligand>
        <name>substrate</name>
    </ligand>
</feature>
<feature type="binding site" evidence="6">
    <location>
        <position position="196"/>
    </location>
    <ligand>
        <name>substrate</name>
    </ligand>
</feature>
<feature type="binding site" evidence="6">
    <location>
        <begin position="205"/>
        <end position="207"/>
    </location>
    <ligand>
        <name>substrate</name>
    </ligand>
</feature>
<feature type="binding site" evidence="6">
    <location>
        <begin position="277"/>
        <end position="279"/>
    </location>
    <ligand>
        <name>substrate</name>
    </ligand>
</feature>
<feature type="binding site" evidence="6">
    <location>
        <position position="310"/>
    </location>
    <ligand>
        <name>substrate</name>
    </ligand>
</feature>
<feature type="binding site" evidence="6">
    <location>
        <position position="511"/>
    </location>
    <ligand>
        <name>substrate</name>
    </ligand>
</feature>
<feature type="helix" evidence="10">
    <location>
        <begin position="40"/>
        <end position="43"/>
    </location>
</feature>
<feature type="helix" evidence="10">
    <location>
        <begin position="45"/>
        <end position="53"/>
    </location>
</feature>
<feature type="strand" evidence="10">
    <location>
        <begin position="57"/>
        <end position="59"/>
    </location>
</feature>
<feature type="helix" evidence="10">
    <location>
        <begin position="61"/>
        <end position="64"/>
    </location>
</feature>
<feature type="strand" evidence="10">
    <location>
        <begin position="67"/>
        <end position="70"/>
    </location>
</feature>
<feature type="helix" evidence="10">
    <location>
        <begin position="72"/>
        <end position="82"/>
    </location>
</feature>
<feature type="helix" evidence="10">
    <location>
        <begin position="90"/>
        <end position="97"/>
    </location>
</feature>
<feature type="helix" evidence="10">
    <location>
        <begin position="115"/>
        <end position="122"/>
    </location>
</feature>
<feature type="turn" evidence="10">
    <location>
        <begin position="123"/>
        <end position="126"/>
    </location>
</feature>
<feature type="helix" evidence="10">
    <location>
        <begin position="158"/>
        <end position="170"/>
    </location>
</feature>
<feature type="helix" evidence="10">
    <location>
        <begin position="174"/>
        <end position="191"/>
    </location>
</feature>
<feature type="strand" evidence="10">
    <location>
        <begin position="196"/>
        <end position="199"/>
    </location>
</feature>
<feature type="helix" evidence="10">
    <location>
        <begin position="200"/>
        <end position="202"/>
    </location>
</feature>
<feature type="helix" evidence="10">
    <location>
        <begin position="211"/>
        <end position="222"/>
    </location>
</feature>
<feature type="helix" evidence="10">
    <location>
        <begin position="224"/>
        <end position="241"/>
    </location>
</feature>
<feature type="turn" evidence="10">
    <location>
        <begin position="242"/>
        <end position="244"/>
    </location>
</feature>
<feature type="helix" evidence="11">
    <location>
        <begin position="245"/>
        <end position="247"/>
    </location>
</feature>
<feature type="strand" evidence="10">
    <location>
        <begin position="252"/>
        <end position="254"/>
    </location>
</feature>
<feature type="strand" evidence="10">
    <location>
        <begin position="257"/>
        <end position="259"/>
    </location>
</feature>
<feature type="strand" evidence="10">
    <location>
        <begin position="265"/>
        <end position="267"/>
    </location>
</feature>
<feature type="helix" evidence="10">
    <location>
        <begin position="278"/>
        <end position="280"/>
    </location>
</feature>
<feature type="helix" evidence="10">
    <location>
        <begin position="281"/>
        <end position="289"/>
    </location>
</feature>
<feature type="helix" evidence="10">
    <location>
        <begin position="296"/>
        <end position="308"/>
    </location>
</feature>
<feature type="helix" evidence="10">
    <location>
        <begin position="315"/>
        <end position="317"/>
    </location>
</feature>
<feature type="strand" evidence="10">
    <location>
        <begin position="318"/>
        <end position="320"/>
    </location>
</feature>
<feature type="helix" evidence="10">
    <location>
        <begin position="324"/>
        <end position="326"/>
    </location>
</feature>
<feature type="helix" evidence="10">
    <location>
        <begin position="329"/>
        <end position="331"/>
    </location>
</feature>
<feature type="helix" evidence="10">
    <location>
        <begin position="335"/>
        <end position="355"/>
    </location>
</feature>
<feature type="helix" evidence="10">
    <location>
        <begin position="358"/>
        <end position="378"/>
    </location>
</feature>
<feature type="strand" evidence="10">
    <location>
        <begin position="379"/>
        <end position="381"/>
    </location>
</feature>
<feature type="turn" evidence="10">
    <location>
        <begin position="382"/>
        <end position="385"/>
    </location>
</feature>
<feature type="turn" evidence="10">
    <location>
        <begin position="392"/>
        <end position="395"/>
    </location>
</feature>
<feature type="helix" evidence="10">
    <location>
        <begin position="403"/>
        <end position="406"/>
    </location>
</feature>
<feature type="helix" evidence="10">
    <location>
        <begin position="407"/>
        <end position="410"/>
    </location>
</feature>
<feature type="helix" evidence="10">
    <location>
        <begin position="416"/>
        <end position="429"/>
    </location>
</feature>
<feature type="strand" evidence="10">
    <location>
        <begin position="438"/>
        <end position="440"/>
    </location>
</feature>
<feature type="strand" evidence="10">
    <location>
        <begin position="444"/>
        <end position="448"/>
    </location>
</feature>
<feature type="helix" evidence="10">
    <location>
        <begin position="454"/>
        <end position="465"/>
    </location>
</feature>
<feature type="turn" evidence="10">
    <location>
        <begin position="466"/>
        <end position="468"/>
    </location>
</feature>
<feature type="helix" evidence="10">
    <location>
        <begin position="470"/>
        <end position="491"/>
    </location>
</feature>
<feature type="strand" evidence="9">
    <location>
        <begin position="492"/>
        <end position="496"/>
    </location>
</feature>
<feature type="strand" evidence="10">
    <location>
        <begin position="502"/>
        <end position="504"/>
    </location>
</feature>
<feature type="strand" evidence="10">
    <location>
        <begin position="510"/>
        <end position="512"/>
    </location>
</feature>
<feature type="helix" evidence="10">
    <location>
        <begin position="519"/>
        <end position="532"/>
    </location>
</feature>
<feature type="strand" evidence="10">
    <location>
        <begin position="535"/>
        <end position="537"/>
    </location>
</feature>
<evidence type="ECO:0000255" key="1">
    <source>
        <dbReference type="HAMAP-Rule" id="MF_01060"/>
    </source>
</evidence>
<evidence type="ECO:0000256" key="2">
    <source>
        <dbReference type="SAM" id="MobiDB-lite"/>
    </source>
</evidence>
<evidence type="ECO:0000269" key="3">
    <source>
    </source>
</evidence>
<evidence type="ECO:0000269" key="4">
    <source>
    </source>
</evidence>
<evidence type="ECO:0000269" key="5">
    <source>
    </source>
</evidence>
<evidence type="ECO:0000305" key="6"/>
<evidence type="ECO:0000305" key="7">
    <source>
    </source>
</evidence>
<evidence type="ECO:0000305" key="8">
    <source>
    </source>
</evidence>
<evidence type="ECO:0007829" key="9">
    <source>
        <dbReference type="PDB" id="2JF4"/>
    </source>
</evidence>
<evidence type="ECO:0007829" key="10">
    <source>
        <dbReference type="PDB" id="2JG0"/>
    </source>
</evidence>
<evidence type="ECO:0007829" key="11">
    <source>
        <dbReference type="PDB" id="2JJB"/>
    </source>
</evidence>
<proteinExistence type="evidence at protein level"/>
<reference key="1">
    <citation type="journal article" date="1989" name="Mol. Gen. Genet.">
        <title>Analysis and DNA sequence of the osmoregulated treA gene encoding the periplasmic trehalase of Escherichia coli K12.</title>
        <authorList>
            <person name="Gutierrez C."/>
            <person name="Ardourel M."/>
            <person name="Bremer E."/>
            <person name="Middendorf A."/>
            <person name="Boos W."/>
            <person name="Ehmann U."/>
        </authorList>
    </citation>
    <scope>NUCLEOTIDE SEQUENCE [GENOMIC DNA]</scope>
    <scope>PROTEIN SEQUENCE OF 31-33 AND 35-43</scope>
    <source>
        <strain>K12</strain>
    </source>
</reference>
<reference key="2">
    <citation type="journal article" date="1996" name="DNA Res.">
        <title>A 718-kb DNA sequence of the Escherichia coli K-12 genome corresponding to the 12.7-28.0 min region on the linkage map.</title>
        <authorList>
            <person name="Oshima T."/>
            <person name="Aiba H."/>
            <person name="Baba T."/>
            <person name="Fujita K."/>
            <person name="Hayashi K."/>
            <person name="Honjo A."/>
            <person name="Ikemoto K."/>
            <person name="Inada T."/>
            <person name="Itoh T."/>
            <person name="Kajihara M."/>
            <person name="Kanai K."/>
            <person name="Kashimoto K."/>
            <person name="Kimura S."/>
            <person name="Kitagawa M."/>
            <person name="Makino K."/>
            <person name="Masuda S."/>
            <person name="Miki T."/>
            <person name="Mizobuchi K."/>
            <person name="Mori H."/>
            <person name="Motomura K."/>
            <person name="Nakamura Y."/>
            <person name="Nashimoto H."/>
            <person name="Nishio Y."/>
            <person name="Saito N."/>
            <person name="Sampei G."/>
            <person name="Seki Y."/>
            <person name="Tagami H."/>
            <person name="Takemoto K."/>
            <person name="Wada C."/>
            <person name="Yamamoto Y."/>
            <person name="Yano M."/>
            <person name="Horiuchi T."/>
        </authorList>
    </citation>
    <scope>NUCLEOTIDE SEQUENCE [LARGE SCALE GENOMIC DNA]</scope>
    <source>
        <strain>K12 / W3110 / ATCC 27325 / DSM 5911</strain>
    </source>
</reference>
<reference key="3">
    <citation type="journal article" date="1997" name="Science">
        <title>The complete genome sequence of Escherichia coli K-12.</title>
        <authorList>
            <person name="Blattner F.R."/>
            <person name="Plunkett G. III"/>
            <person name="Bloch C.A."/>
            <person name="Perna N.T."/>
            <person name="Burland V."/>
            <person name="Riley M."/>
            <person name="Collado-Vides J."/>
            <person name="Glasner J.D."/>
            <person name="Rode C.K."/>
            <person name="Mayhew G.F."/>
            <person name="Gregor J."/>
            <person name="Davis N.W."/>
            <person name="Kirkpatrick H.A."/>
            <person name="Goeden M.A."/>
            <person name="Rose D.J."/>
            <person name="Mau B."/>
            <person name="Shao Y."/>
        </authorList>
    </citation>
    <scope>NUCLEOTIDE SEQUENCE [LARGE SCALE GENOMIC DNA]</scope>
    <source>
        <strain>K12 / MG1655 / ATCC 47076</strain>
    </source>
</reference>
<reference key="4">
    <citation type="journal article" date="2006" name="Mol. Syst. Biol.">
        <title>Highly accurate genome sequences of Escherichia coli K-12 strains MG1655 and W3110.</title>
        <authorList>
            <person name="Hayashi K."/>
            <person name="Morooka N."/>
            <person name="Yamamoto Y."/>
            <person name="Fujita K."/>
            <person name="Isono K."/>
            <person name="Choi S."/>
            <person name="Ohtsubo E."/>
            <person name="Baba T."/>
            <person name="Wanner B.L."/>
            <person name="Mori H."/>
            <person name="Horiuchi T."/>
        </authorList>
    </citation>
    <scope>NUCLEOTIDE SEQUENCE [LARGE SCALE GENOMIC DNA]</scope>
    <source>
        <strain>K12 / W3110 / ATCC 27325 / DSM 5911</strain>
    </source>
</reference>
<reference key="5">
    <citation type="journal article" date="1991" name="Mol. Microbiol.">
        <title>Osmotic induction of the periplasmic trehalase in Escherichia coli K12: characterization of the treA gene promoter.</title>
        <authorList>
            <person name="Repoila F."/>
            <person name="Gutierrez C."/>
        </authorList>
    </citation>
    <scope>NUCLEOTIDE SEQUENCE [GENOMIC DNA] OF 1-66</scope>
    <source>
        <strain>K12</strain>
    </source>
</reference>
<reference key="6">
    <citation type="journal article" date="1987" name="J. Biol. Chem.">
        <title>Trehalase of Escherichia coli. Mapping and cloning of its structural gene and identification of the enzyme as a periplasmic protein induced under high osmolarity growth conditions.</title>
        <authorList>
            <person name="Boos W."/>
            <person name="Ehmann U."/>
            <person name="Bremer E."/>
            <person name="Middendorf A."/>
            <person name="Postma P."/>
        </authorList>
    </citation>
    <scope>CHARACTERIZATION</scope>
    <source>
        <strain>K12</strain>
    </source>
</reference>
<reference key="7">
    <citation type="journal article" date="2007" name="Angew. Chem. Int. Ed. Engl.">
        <title>Molecular basis for trehalase inhibition revealed by the structure of trehalase in complex with potent inhibitors.</title>
        <authorList>
            <person name="Gibson R.P."/>
            <person name="Gloster T.M."/>
            <person name="Roberts S."/>
            <person name="Warren R.A."/>
            <person name="Storch de Gracia I."/>
            <person name="Garcia A."/>
            <person name="Chiara J.L."/>
            <person name="Davies G.J."/>
        </authorList>
    </citation>
    <scope>X-RAY CRYSTALLOGRAPHY (1.50 ANGSTROMS) OF 31-565 IN COMPLEXES WITH INHIBITORS</scope>
    <scope>CATALYTIC ACTIVITY</scope>
    <scope>PREDICTED ACTIVE SITE</scope>
    <source>
        <strain>K12</strain>
    </source>
</reference>
<reference key="8">
    <citation type="journal article" date="2009" name="Chemistry">
        <title>Total syntheses of casuarine and its 6-O-alpha-glucoside: complementary inhibition towards glycoside hydrolases of the GH31 and GH37 families.</title>
        <authorList>
            <person name="Cardona F."/>
            <person name="Parmeggiani C."/>
            <person name="Faggi E."/>
            <person name="Bonaccini C."/>
            <person name="Gratteri P."/>
            <person name="Sim L."/>
            <person name="Gloster T.M."/>
            <person name="Roberts S."/>
            <person name="Davies G.J."/>
            <person name="Rose D.R."/>
            <person name="Goti A."/>
        </authorList>
    </citation>
    <scope>X-RAY CRYSTALLOGRAPHY (1.90 ANGSTROMS) OF 31-565 IN COMPLEX WITH INHIBITOR</scope>
    <scope>CATALYTIC ACTIVITY</scope>
    <scope>PREDICTED ACTIVE SITE</scope>
    <source>
        <strain>K12</strain>
    </source>
</reference>
<dbReference type="EC" id="3.2.1.28" evidence="1"/>
<dbReference type="EMBL" id="X15868">
    <property type="protein sequence ID" value="CAA33878.1"/>
    <property type="molecule type" value="Genomic_DNA"/>
</dbReference>
<dbReference type="EMBL" id="U00096">
    <property type="protein sequence ID" value="AAC74281.1"/>
    <property type="molecule type" value="Genomic_DNA"/>
</dbReference>
<dbReference type="EMBL" id="AP009048">
    <property type="protein sequence ID" value="BAA36054.1"/>
    <property type="molecule type" value="Genomic_DNA"/>
</dbReference>
<dbReference type="PIR" id="S04782">
    <property type="entry name" value="S04782"/>
</dbReference>
<dbReference type="RefSeq" id="NP_415715.1">
    <property type="nucleotide sequence ID" value="NC_000913.3"/>
</dbReference>
<dbReference type="RefSeq" id="WP_000841714.1">
    <property type="nucleotide sequence ID" value="NZ_SSZK01000010.1"/>
</dbReference>
<dbReference type="PDB" id="2JF4">
    <property type="method" value="X-ray"/>
    <property type="resolution" value="2.20 A"/>
    <property type="chains" value="A=31-565"/>
</dbReference>
<dbReference type="PDB" id="2JG0">
    <property type="method" value="X-ray"/>
    <property type="resolution" value="1.50 A"/>
    <property type="chains" value="A=31-565"/>
</dbReference>
<dbReference type="PDB" id="2JJB">
    <property type="method" value="X-ray"/>
    <property type="resolution" value="1.90 A"/>
    <property type="chains" value="A/B/C/D=31-565"/>
</dbReference>
<dbReference type="PDB" id="2WYN">
    <property type="method" value="X-ray"/>
    <property type="resolution" value="2.10 A"/>
    <property type="chains" value="A/B/C/D=31-565"/>
</dbReference>
<dbReference type="PDBsum" id="2JF4"/>
<dbReference type="PDBsum" id="2JG0"/>
<dbReference type="PDBsum" id="2JJB"/>
<dbReference type="PDBsum" id="2WYN"/>
<dbReference type="SMR" id="P13482"/>
<dbReference type="BioGRID" id="4260095">
    <property type="interactions" value="142"/>
</dbReference>
<dbReference type="DIP" id="DIP-11022N"/>
<dbReference type="FunCoup" id="P13482">
    <property type="interactions" value="257"/>
</dbReference>
<dbReference type="IntAct" id="P13482">
    <property type="interactions" value="5"/>
</dbReference>
<dbReference type="STRING" id="511145.b1197"/>
<dbReference type="CAZy" id="GH37">
    <property type="family name" value="Glycoside Hydrolase Family 37"/>
</dbReference>
<dbReference type="jPOST" id="P13482"/>
<dbReference type="PaxDb" id="511145-b1197"/>
<dbReference type="EnsemblBacteria" id="AAC74281">
    <property type="protein sequence ID" value="AAC74281"/>
    <property type="gene ID" value="b1197"/>
</dbReference>
<dbReference type="GeneID" id="945757"/>
<dbReference type="KEGG" id="ecj:JW1186"/>
<dbReference type="KEGG" id="eco:b1197"/>
<dbReference type="KEGG" id="ecoc:C3026_07040"/>
<dbReference type="PATRIC" id="fig|1411691.4.peg.1089"/>
<dbReference type="EchoBASE" id="EB1010"/>
<dbReference type="eggNOG" id="COG1626">
    <property type="taxonomic scope" value="Bacteria"/>
</dbReference>
<dbReference type="HOGENOM" id="CLU_006451_3_1_6"/>
<dbReference type="InParanoid" id="P13482"/>
<dbReference type="OMA" id="RYWDASD"/>
<dbReference type="OrthoDB" id="106887at2"/>
<dbReference type="PhylomeDB" id="P13482"/>
<dbReference type="BioCyc" id="EcoCyc:TREHALAPERI-MONOMER"/>
<dbReference type="BioCyc" id="MetaCyc:TREHALAPERI-MONOMER"/>
<dbReference type="BRENDA" id="3.2.1.28">
    <property type="organism ID" value="2026"/>
</dbReference>
<dbReference type="EvolutionaryTrace" id="P13482"/>
<dbReference type="PHI-base" id="PHI:10199"/>
<dbReference type="PRO" id="PR:P13482"/>
<dbReference type="Proteomes" id="UP000000625">
    <property type="component" value="Chromosome"/>
</dbReference>
<dbReference type="GO" id="GO:0030288">
    <property type="term" value="C:outer membrane-bounded periplasmic space"/>
    <property type="evidence" value="ECO:0000314"/>
    <property type="project" value="EcoCyc"/>
</dbReference>
<dbReference type="GO" id="GO:0004555">
    <property type="term" value="F:alpha,alpha-trehalase activity"/>
    <property type="evidence" value="ECO:0000314"/>
    <property type="project" value="UniProtKB"/>
</dbReference>
<dbReference type="GO" id="GO:0071474">
    <property type="term" value="P:cellular hyperosmotic response"/>
    <property type="evidence" value="ECO:0000270"/>
    <property type="project" value="EcoCyc"/>
</dbReference>
<dbReference type="GO" id="GO:0006974">
    <property type="term" value="P:DNA damage response"/>
    <property type="evidence" value="ECO:0000270"/>
    <property type="project" value="EcoliWiki"/>
</dbReference>
<dbReference type="GO" id="GO:0005993">
    <property type="term" value="P:trehalose catabolic process"/>
    <property type="evidence" value="ECO:0000314"/>
    <property type="project" value="UniProtKB"/>
</dbReference>
<dbReference type="FunFam" id="1.50.10.10:FF:000003">
    <property type="entry name" value="Cytoplasmic trehalase"/>
    <property type="match status" value="1"/>
</dbReference>
<dbReference type="Gene3D" id="1.50.10.10">
    <property type="match status" value="1"/>
</dbReference>
<dbReference type="HAMAP" id="MF_01060">
    <property type="entry name" value="Peripl_trehalase"/>
    <property type="match status" value="1"/>
</dbReference>
<dbReference type="InterPro" id="IPR008928">
    <property type="entry name" value="6-hairpin_glycosidase_sf"/>
</dbReference>
<dbReference type="InterPro" id="IPR012341">
    <property type="entry name" value="6hp_glycosidase-like_sf"/>
</dbReference>
<dbReference type="InterPro" id="IPR001661">
    <property type="entry name" value="Glyco_hydro_37"/>
</dbReference>
<dbReference type="InterPro" id="IPR018232">
    <property type="entry name" value="Glyco_hydro_37_CS"/>
</dbReference>
<dbReference type="InterPro" id="IPR023720">
    <property type="entry name" value="Trehalase_periplasmic"/>
</dbReference>
<dbReference type="NCBIfam" id="NF009773">
    <property type="entry name" value="PRK13270.1"/>
    <property type="match status" value="1"/>
</dbReference>
<dbReference type="NCBIfam" id="NF009774">
    <property type="entry name" value="PRK13271.1"/>
    <property type="match status" value="1"/>
</dbReference>
<dbReference type="PANTHER" id="PTHR23403">
    <property type="entry name" value="TREHALASE"/>
    <property type="match status" value="1"/>
</dbReference>
<dbReference type="PANTHER" id="PTHR23403:SF1">
    <property type="entry name" value="TREHALASE"/>
    <property type="match status" value="1"/>
</dbReference>
<dbReference type="Pfam" id="PF01204">
    <property type="entry name" value="Trehalase"/>
    <property type="match status" value="1"/>
</dbReference>
<dbReference type="PRINTS" id="PR00744">
    <property type="entry name" value="GLHYDRLASE37"/>
</dbReference>
<dbReference type="SUPFAM" id="SSF48208">
    <property type="entry name" value="Six-hairpin glycosidases"/>
    <property type="match status" value="1"/>
</dbReference>
<dbReference type="PROSITE" id="PS00927">
    <property type="entry name" value="TREHALASE_1"/>
    <property type="match status" value="1"/>
</dbReference>
<dbReference type="PROSITE" id="PS00928">
    <property type="entry name" value="TREHALASE_2"/>
    <property type="match status" value="1"/>
</dbReference>
<keyword id="KW-0002">3D-structure</keyword>
<keyword id="KW-0903">Direct protein sequencing</keyword>
<keyword id="KW-0326">Glycosidase</keyword>
<keyword id="KW-0378">Hydrolase</keyword>
<keyword id="KW-0574">Periplasm</keyword>
<keyword id="KW-1185">Reference proteome</keyword>
<keyword id="KW-0732">Signal</keyword>